<name>SMC5_MOUSE</name>
<reference key="1">
    <citation type="journal article" date="2004" name="Mol. Biol. Evol.">
        <title>The evolution of SMC proteins: phylogenetic analysis and structural implications.</title>
        <authorList>
            <person name="Cobbe N."/>
            <person name="Heck M.M.S."/>
        </authorList>
    </citation>
    <scope>NUCLEOTIDE SEQUENCE [MRNA] (ISOFORM 1)</scope>
</reference>
<reference key="2">
    <citation type="journal article" date="2004" name="Genome Res.">
        <title>The status, quality, and expansion of the NIH full-length cDNA project: the Mammalian Gene Collection (MGC).</title>
        <authorList>
            <consortium name="The MGC Project Team"/>
        </authorList>
    </citation>
    <scope>NUCLEOTIDE SEQUENCE [LARGE SCALE MRNA] (ISOFORM 2)</scope>
    <source>
        <strain>FVB/N</strain>
        <tissue>Mammary tumor</tissue>
    </source>
</reference>
<reference key="3">
    <citation type="journal article" date="2003" name="DNA Res.">
        <title>Prediction of the coding sequences of mouse homologues of KIAA gene: II. The complete nucleotide sequences of 400 mouse KIAA-homologous cDNAs identified by screening of terminal sequences of cDNA clones randomly sampled from size-fractionated libraries.</title>
        <authorList>
            <person name="Okazaki N."/>
            <person name="Kikuno R."/>
            <person name="Ohara R."/>
            <person name="Inamoto S."/>
            <person name="Aizawa H."/>
            <person name="Yuasa S."/>
            <person name="Nakajima D."/>
            <person name="Nagase T."/>
            <person name="Ohara O."/>
            <person name="Koga H."/>
        </authorList>
    </citation>
    <scope>NUCLEOTIDE SEQUENCE [LARGE SCALE MRNA] OF 326-1101 (ISOFORM 1)</scope>
    <source>
        <tissue>Brain</tissue>
    </source>
</reference>
<reference key="4">
    <citation type="journal article" date="2001" name="Mol. Biol. Cell">
        <title>Characterization of a novel human SMC heterodimer homologous to the Schizosaccharomyces pombe Rad18/Spr18 complex.</title>
        <authorList>
            <person name="Taylor E.M."/>
            <person name="Moghraby J.S."/>
            <person name="Lees J.H."/>
            <person name="Smit B."/>
            <person name="Moens P.B."/>
            <person name="Lehmann A.R."/>
        </authorList>
    </citation>
    <scope>SUBCELLULAR LOCATION</scope>
</reference>
<reference key="5">
    <citation type="journal article" date="2010" name="Cell">
        <title>A tissue-specific atlas of mouse protein phosphorylation and expression.</title>
        <authorList>
            <person name="Huttlin E.L."/>
            <person name="Jedrychowski M.P."/>
            <person name="Elias J.E."/>
            <person name="Goswami T."/>
            <person name="Rad R."/>
            <person name="Beausoleil S.A."/>
            <person name="Villen J."/>
            <person name="Haas W."/>
            <person name="Sowa M.E."/>
            <person name="Gygi S.P."/>
        </authorList>
    </citation>
    <scope>IDENTIFICATION BY MASS SPECTROMETRY [LARGE SCALE ANALYSIS]</scope>
    <source>
        <tissue>Testis</tissue>
    </source>
</reference>
<reference key="6">
    <citation type="journal article" date="2010" name="J. Hum. Genet.">
        <title>Screening of genes involved in chromosome segregation during meiosis I: toward the identification of genes responsible for infertility in humans.</title>
        <authorList>
            <person name="Kogo H."/>
            <person name="Kowa-Sugiyama H."/>
            <person name="Yamada K."/>
            <person name="Bolor H."/>
            <person name="Tsutsumi M."/>
            <person name="Ohye T."/>
            <person name="Inagaki H."/>
            <person name="Taniguchi M."/>
            <person name="Toda T."/>
            <person name="Kurahashi H."/>
        </authorList>
    </citation>
    <scope>TISSUE SPECIFICITY</scope>
    <scope>DEVELOPMENTAL STAGE</scope>
    <scope>SUBCELLULAR LOCATION</scope>
</reference>
<proteinExistence type="evidence at protein level"/>
<feature type="chain" id="PRO_0000270952" description="Structural maintenance of chromosomes protein 5">
    <location>
        <begin position="1"/>
        <end position="1101"/>
    </location>
</feature>
<feature type="region of interest" description="Disordered" evidence="4">
    <location>
        <begin position="1"/>
        <end position="44"/>
    </location>
</feature>
<feature type="region of interest" description="Flexible hinge">
    <location>
        <begin position="441"/>
        <end position="644"/>
    </location>
</feature>
<feature type="coiled-coil region" evidence="3">
    <location>
        <begin position="207"/>
        <end position="440"/>
    </location>
</feature>
<feature type="coiled-coil region" evidence="3">
    <location>
        <begin position="645"/>
        <end position="753"/>
    </location>
</feature>
<feature type="coiled-coil region" evidence="3">
    <location>
        <begin position="780"/>
        <end position="828"/>
    </location>
</feature>
<feature type="coiled-coil region" evidence="3">
    <location>
        <begin position="888"/>
        <end position="927"/>
    </location>
</feature>
<feature type="binding site" evidence="3">
    <location>
        <begin position="80"/>
        <end position="87"/>
    </location>
    <ligand>
        <name>ATP</name>
        <dbReference type="ChEBI" id="CHEBI:30616"/>
    </ligand>
</feature>
<feature type="modified residue" description="Phosphoserine" evidence="2">
    <location>
        <position position="25"/>
    </location>
</feature>
<feature type="modified residue" description="Phosphoserine" evidence="2">
    <location>
        <position position="35"/>
    </location>
</feature>
<feature type="splice variant" id="VSP_022251" description="In isoform 2." evidence="7">
    <location>
        <begin position="842"/>
        <end position="856"/>
    </location>
</feature>
<feature type="splice variant" id="VSP_022252" description="In isoform 2." evidence="7">
    <original>S</original>
    <variation>SV</variation>
    <location>
        <position position="888"/>
    </location>
</feature>
<feature type="sequence conflict" description="In Ref. 3; AAH07174." evidence="8" ref="3">
    <original>Y</original>
    <variation>C</variation>
    <location>
        <position position="545"/>
    </location>
</feature>
<feature type="sequence conflict" description="In Ref. 3; AAH07174." evidence="8" ref="3">
    <original>A</original>
    <variation>T</variation>
    <location>
        <position position="675"/>
    </location>
</feature>
<feature type="sequence conflict" description="In Ref. 3; BAC65603." evidence="8" ref="3">
    <original>QVPTIP</original>
    <variation>VSIKIS</variation>
    <location>
        <begin position="842"/>
        <end position="847"/>
    </location>
</feature>
<accession>Q8CG46</accession>
<accession>Q80TW7</accession>
<accession>Q8CHX5</accession>
<accession>Q922K3</accession>
<keyword id="KW-0025">Alternative splicing</keyword>
<keyword id="KW-0067">ATP-binding</keyword>
<keyword id="KW-0131">Cell cycle</keyword>
<keyword id="KW-0132">Cell division</keyword>
<keyword id="KW-0158">Chromosome</keyword>
<keyword id="KW-0175">Coiled coil</keyword>
<keyword id="KW-0227">DNA damage</keyword>
<keyword id="KW-0233">DNA recombination</keyword>
<keyword id="KW-0234">DNA repair</keyword>
<keyword id="KW-0498">Mitosis</keyword>
<keyword id="KW-0547">Nucleotide-binding</keyword>
<keyword id="KW-0539">Nucleus</keyword>
<keyword id="KW-0597">Phosphoprotein</keyword>
<keyword id="KW-1185">Reference proteome</keyword>
<keyword id="KW-0779">Telomere</keyword>
<keyword id="KW-0832">Ubl conjugation</keyword>
<organism>
    <name type="scientific">Mus musculus</name>
    <name type="common">Mouse</name>
    <dbReference type="NCBI Taxonomy" id="10090"/>
    <lineage>
        <taxon>Eukaryota</taxon>
        <taxon>Metazoa</taxon>
        <taxon>Chordata</taxon>
        <taxon>Craniata</taxon>
        <taxon>Vertebrata</taxon>
        <taxon>Euteleostomi</taxon>
        <taxon>Mammalia</taxon>
        <taxon>Eutheria</taxon>
        <taxon>Euarchontoglires</taxon>
        <taxon>Glires</taxon>
        <taxon>Rodentia</taxon>
        <taxon>Myomorpha</taxon>
        <taxon>Muroidea</taxon>
        <taxon>Muridae</taxon>
        <taxon>Murinae</taxon>
        <taxon>Mus</taxon>
        <taxon>Mus</taxon>
    </lineage>
</organism>
<dbReference type="EMBL" id="AJ534941">
    <property type="protein sequence ID" value="CAD59184.1"/>
    <property type="molecule type" value="mRNA"/>
</dbReference>
<dbReference type="EMBL" id="BC007174">
    <property type="protein sequence ID" value="AAH07174.1"/>
    <property type="status" value="ALT_INIT"/>
    <property type="molecule type" value="mRNA"/>
</dbReference>
<dbReference type="EMBL" id="BC038345">
    <property type="protein sequence ID" value="AAH38345.1"/>
    <property type="molecule type" value="mRNA"/>
</dbReference>
<dbReference type="EMBL" id="AK122321">
    <property type="protein sequence ID" value="BAC65603.3"/>
    <property type="molecule type" value="Transcribed_RNA"/>
</dbReference>
<dbReference type="CCDS" id="CCDS37936.1">
    <molecule id="Q8CG46-2"/>
</dbReference>
<dbReference type="CCDS" id="CCDS89364.1">
    <molecule id="Q8CG46-1"/>
</dbReference>
<dbReference type="RefSeq" id="NP_001239613.1">
    <molecule id="Q8CG46-1"/>
    <property type="nucleotide sequence ID" value="NM_001252684.2"/>
</dbReference>
<dbReference type="RefSeq" id="NP_722503.1">
    <molecule id="Q8CG46-2"/>
    <property type="nucleotide sequence ID" value="NM_153808.3"/>
</dbReference>
<dbReference type="SMR" id="Q8CG46"/>
<dbReference type="BioGRID" id="230460">
    <property type="interactions" value="7"/>
</dbReference>
<dbReference type="FunCoup" id="Q8CG46">
    <property type="interactions" value="4063"/>
</dbReference>
<dbReference type="IntAct" id="Q8CG46">
    <property type="interactions" value="2"/>
</dbReference>
<dbReference type="MINT" id="Q8CG46"/>
<dbReference type="STRING" id="10090.ENSMUSP00000153364"/>
<dbReference type="GlyGen" id="Q8CG46">
    <property type="glycosylation" value="1 site"/>
</dbReference>
<dbReference type="iPTMnet" id="Q8CG46"/>
<dbReference type="PhosphoSitePlus" id="Q8CG46"/>
<dbReference type="SwissPalm" id="Q8CG46"/>
<dbReference type="jPOST" id="Q8CG46"/>
<dbReference type="PaxDb" id="10090-ENSMUSP00000084837"/>
<dbReference type="PeptideAtlas" id="Q8CG46"/>
<dbReference type="ProteomicsDB" id="261257">
    <molecule id="Q8CG46-1"/>
</dbReference>
<dbReference type="ProteomicsDB" id="261258">
    <molecule id="Q8CG46-2"/>
</dbReference>
<dbReference type="Pumba" id="Q8CG46"/>
<dbReference type="Antibodypedia" id="26866">
    <property type="antibodies" value="196 antibodies from 28 providers"/>
</dbReference>
<dbReference type="Ensembl" id="ENSMUST00000087556.7">
    <molecule id="Q8CG46-1"/>
    <property type="protein sequence ID" value="ENSMUSP00000084837.7"/>
    <property type="gene ID" value="ENSMUSG00000024943.10"/>
</dbReference>
<dbReference type="Ensembl" id="ENSMUST00000223934.2">
    <molecule id="Q8CG46-2"/>
    <property type="protein sequence ID" value="ENSMUSP00000153364.2"/>
    <property type="gene ID" value="ENSMUSG00000024943.10"/>
</dbReference>
<dbReference type="GeneID" id="226026"/>
<dbReference type="KEGG" id="mmu:226026"/>
<dbReference type="UCSC" id="uc008haa.2">
    <molecule id="Q8CG46-2"/>
    <property type="organism name" value="mouse"/>
</dbReference>
<dbReference type="UCSC" id="uc008hab.2">
    <molecule id="Q8CG46-1"/>
    <property type="organism name" value="mouse"/>
</dbReference>
<dbReference type="AGR" id="MGI:2385088"/>
<dbReference type="CTD" id="23137"/>
<dbReference type="MGI" id="MGI:2385088">
    <property type="gene designation" value="Smc5"/>
</dbReference>
<dbReference type="VEuPathDB" id="HostDB:ENSMUSG00000024943"/>
<dbReference type="eggNOG" id="KOG0979">
    <property type="taxonomic scope" value="Eukaryota"/>
</dbReference>
<dbReference type="GeneTree" id="ENSGT00550000074816"/>
<dbReference type="HOGENOM" id="CLU_004969_1_0_1"/>
<dbReference type="InParanoid" id="Q8CG46"/>
<dbReference type="OMA" id="RFWTSQP"/>
<dbReference type="OrthoDB" id="10254973at2759"/>
<dbReference type="PhylomeDB" id="Q8CG46"/>
<dbReference type="TreeFam" id="TF105708"/>
<dbReference type="Reactome" id="R-MMU-3108214">
    <property type="pathway name" value="SUMOylation of DNA damage response and repair proteins"/>
</dbReference>
<dbReference type="BioGRID-ORCS" id="226026">
    <property type="hits" value="23 hits in 113 CRISPR screens"/>
</dbReference>
<dbReference type="ChiTaRS" id="Smc5">
    <property type="organism name" value="mouse"/>
</dbReference>
<dbReference type="PRO" id="PR:Q8CG46"/>
<dbReference type="Proteomes" id="UP000000589">
    <property type="component" value="Chromosome 19"/>
</dbReference>
<dbReference type="RNAct" id="Q8CG46">
    <property type="molecule type" value="protein"/>
</dbReference>
<dbReference type="Bgee" id="ENSMUSG00000024943">
    <property type="expression patterns" value="Expressed in spermatid and 255 other cell types or tissues"/>
</dbReference>
<dbReference type="ExpressionAtlas" id="Q8CG46">
    <property type="expression patterns" value="baseline and differential"/>
</dbReference>
<dbReference type="GO" id="GO:0030054">
    <property type="term" value="C:cell junction"/>
    <property type="evidence" value="ECO:0007669"/>
    <property type="project" value="Ensembl"/>
</dbReference>
<dbReference type="GO" id="GO:0000775">
    <property type="term" value="C:chromosome, centromeric region"/>
    <property type="evidence" value="ECO:0000314"/>
    <property type="project" value="MGI"/>
</dbReference>
<dbReference type="GO" id="GO:0000781">
    <property type="term" value="C:chromosome, telomeric region"/>
    <property type="evidence" value="ECO:0000315"/>
    <property type="project" value="BHF-UCL"/>
</dbReference>
<dbReference type="GO" id="GO:0005737">
    <property type="term" value="C:cytoplasm"/>
    <property type="evidence" value="ECO:0000314"/>
    <property type="project" value="MGI"/>
</dbReference>
<dbReference type="GO" id="GO:0035061">
    <property type="term" value="C:interchromatin granule"/>
    <property type="evidence" value="ECO:0000250"/>
    <property type="project" value="UniProtKB"/>
</dbReference>
<dbReference type="GO" id="GO:0016607">
    <property type="term" value="C:nuclear speck"/>
    <property type="evidence" value="ECO:0007669"/>
    <property type="project" value="Ensembl"/>
</dbReference>
<dbReference type="GO" id="GO:0005634">
    <property type="term" value="C:nucleus"/>
    <property type="evidence" value="ECO:0000314"/>
    <property type="project" value="UniProtKB"/>
</dbReference>
<dbReference type="GO" id="GO:0016605">
    <property type="term" value="C:PML body"/>
    <property type="evidence" value="ECO:0000315"/>
    <property type="project" value="BHF-UCL"/>
</dbReference>
<dbReference type="GO" id="GO:0000803">
    <property type="term" value="C:sex chromosome"/>
    <property type="evidence" value="ECO:0000314"/>
    <property type="project" value="UniProtKB"/>
</dbReference>
<dbReference type="GO" id="GO:0035861">
    <property type="term" value="C:site of double-strand break"/>
    <property type="evidence" value="ECO:0000250"/>
    <property type="project" value="UniProtKB"/>
</dbReference>
<dbReference type="GO" id="GO:0030915">
    <property type="term" value="C:Smc5-Smc6 complex"/>
    <property type="evidence" value="ECO:0000314"/>
    <property type="project" value="MGI"/>
</dbReference>
<dbReference type="GO" id="GO:0005524">
    <property type="term" value="F:ATP binding"/>
    <property type="evidence" value="ECO:0007669"/>
    <property type="project" value="UniProtKB-KW"/>
</dbReference>
<dbReference type="GO" id="GO:0000217">
    <property type="term" value="F:DNA secondary structure binding"/>
    <property type="evidence" value="ECO:0007669"/>
    <property type="project" value="Ensembl"/>
</dbReference>
<dbReference type="GO" id="GO:0051301">
    <property type="term" value="P:cell division"/>
    <property type="evidence" value="ECO:0007669"/>
    <property type="project" value="UniProtKB-KW"/>
</dbReference>
<dbReference type="GO" id="GO:0090398">
    <property type="term" value="P:cellular senescence"/>
    <property type="evidence" value="ECO:0000250"/>
    <property type="project" value="UniProtKB"/>
</dbReference>
<dbReference type="GO" id="GO:0030261">
    <property type="term" value="P:chromosome condensation"/>
    <property type="evidence" value="ECO:0000315"/>
    <property type="project" value="MGI"/>
</dbReference>
<dbReference type="GO" id="GO:0007059">
    <property type="term" value="P:chromosome segregation"/>
    <property type="evidence" value="ECO:0000315"/>
    <property type="project" value="MGI"/>
</dbReference>
<dbReference type="GO" id="GO:0006974">
    <property type="term" value="P:DNA damage response"/>
    <property type="evidence" value="ECO:0000250"/>
    <property type="project" value="UniProtKB"/>
</dbReference>
<dbReference type="GO" id="GO:0000724">
    <property type="term" value="P:double-strand break repair via homologous recombination"/>
    <property type="evidence" value="ECO:0000250"/>
    <property type="project" value="UniProtKB"/>
</dbReference>
<dbReference type="GO" id="GO:0044772">
    <property type="term" value="P:mitotic cell cycle phase transition"/>
    <property type="evidence" value="ECO:0000315"/>
    <property type="project" value="MGI"/>
</dbReference>
<dbReference type="GO" id="GO:0044828">
    <property type="term" value="P:negative regulation by host of viral genome replication"/>
    <property type="evidence" value="ECO:0007669"/>
    <property type="project" value="Ensembl"/>
</dbReference>
<dbReference type="GO" id="GO:0051984">
    <property type="term" value="P:positive regulation of chromosome segregation"/>
    <property type="evidence" value="ECO:0000250"/>
    <property type="project" value="UniProtKB"/>
</dbReference>
<dbReference type="GO" id="GO:0034184">
    <property type="term" value="P:positive regulation of maintenance of mitotic sister chromatid cohesion"/>
    <property type="evidence" value="ECO:0000250"/>
    <property type="project" value="UniProtKB"/>
</dbReference>
<dbReference type="GO" id="GO:0071459">
    <property type="term" value="P:protein localization to chromosome, centromeric region"/>
    <property type="evidence" value="ECO:0000315"/>
    <property type="project" value="MGI"/>
</dbReference>
<dbReference type="GO" id="GO:0019827">
    <property type="term" value="P:stem cell population maintenance"/>
    <property type="evidence" value="ECO:0000315"/>
    <property type="project" value="MGI"/>
</dbReference>
<dbReference type="GO" id="GO:0000722">
    <property type="term" value="P:telomere maintenance via recombination"/>
    <property type="evidence" value="ECO:0000250"/>
    <property type="project" value="UniProtKB"/>
</dbReference>
<dbReference type="FunFam" id="3.40.50.300:FF:000793">
    <property type="entry name" value="Structural maintenance of chromosomes protein 5"/>
    <property type="match status" value="1"/>
</dbReference>
<dbReference type="FunFam" id="3.40.50.300:FF:001434">
    <property type="entry name" value="Structural maintenance of chromosomes protein 5"/>
    <property type="match status" value="1"/>
</dbReference>
<dbReference type="Gene3D" id="3.40.50.300">
    <property type="entry name" value="P-loop containing nucleotide triphosphate hydrolases"/>
    <property type="match status" value="2"/>
</dbReference>
<dbReference type="InterPro" id="IPR027417">
    <property type="entry name" value="P-loop_NTPase"/>
</dbReference>
<dbReference type="InterPro" id="IPR003395">
    <property type="entry name" value="RecF/RecN/SMC_N"/>
</dbReference>
<dbReference type="PANTHER" id="PTHR45916">
    <property type="entry name" value="STRUCTURAL MAINTENANCE OF CHROMOSOMES PROTEIN 5"/>
    <property type="match status" value="1"/>
</dbReference>
<dbReference type="PANTHER" id="PTHR45916:SF1">
    <property type="entry name" value="STRUCTURAL MAINTENANCE OF CHROMOSOMES PROTEIN 5"/>
    <property type="match status" value="1"/>
</dbReference>
<dbReference type="Pfam" id="PF02463">
    <property type="entry name" value="SMC_N"/>
    <property type="match status" value="1"/>
</dbReference>
<dbReference type="SUPFAM" id="SSF52540">
    <property type="entry name" value="P-loop containing nucleoside triphosphate hydrolases"/>
    <property type="match status" value="2"/>
</dbReference>
<evidence type="ECO:0000250" key="1"/>
<evidence type="ECO:0000250" key="2">
    <source>
        <dbReference type="UniProtKB" id="Q8IY18"/>
    </source>
</evidence>
<evidence type="ECO:0000255" key="3"/>
<evidence type="ECO:0000256" key="4">
    <source>
        <dbReference type="SAM" id="MobiDB-lite"/>
    </source>
</evidence>
<evidence type="ECO:0000269" key="5">
    <source>
    </source>
</evidence>
<evidence type="ECO:0000269" key="6">
    <source>
    </source>
</evidence>
<evidence type="ECO:0000303" key="7">
    <source>
    </source>
</evidence>
<evidence type="ECO:0000305" key="8"/>
<comment type="function">
    <text evidence="1">Core component of the SMC5-SMC6 complex, a complex involved in repair of DNA double-strand breaks by homologous recombination. The complex may promote sister chromatid homologous recombination by recruiting the SMC1-SMC3 cohesin complex to double-strand breaks. The complex is required for telomere maintenance via recombination and mediates sumoylation of shelterin complex (telosome) components. Required for sister chromatid cohesion during prometaphase and mitotic progression; the function seems to be independent of SMC6 (By similarity).</text>
</comment>
<comment type="subunit">
    <text evidence="2">Forms a heterodimer with SMC6. Component of the SMC5-SMC6 complex which consists at least of SMC5, SMC6, NSMCE2, NSMCE1, NSMCE4A or EID3 and NSMCE3. Interacts with NSMCE2. Interacts with SLF2; this interaction induces an association of the SLF1-SLF2 complex with the SMC5-SMC6 complex. Interacts with RAD18; this interaction is increased in a SLF1 or SLF2-dependent manner.</text>
</comment>
<comment type="subcellular location">
    <subcellularLocation>
        <location evidence="5 6">Nucleus</location>
    </subcellularLocation>
    <subcellularLocation>
        <location evidence="5">Chromosome</location>
    </subcellularLocation>
    <subcellularLocation>
        <location evidence="2">Nucleus</location>
        <location evidence="2">PML body</location>
    </subcellularLocation>
    <subcellularLocation>
        <location evidence="2">Chromosome</location>
        <location evidence="2">Telomere</location>
    </subcellularLocation>
    <text evidence="2 5">Colocalizes with SMC6 on the X-Y chromosome pair within the sex vesicle during late pachytene/diplotene (PubMed:11408570). Associates with chromatin. Localizes to PML nuclear bodies in ALT cell lines. Accumulates with RAD18 and the SLF1-SLF2 complex at replication-coupled DNA interstrand repair and DNA double-strand breaks (DSBs) sites on chromatin in a ubiquitin-dependent manner.</text>
</comment>
<comment type="alternative products">
    <event type="alternative splicing"/>
    <isoform>
        <id>Q8CG46-1</id>
        <name>1</name>
        <sequence type="displayed"/>
    </isoform>
    <isoform>
        <id>Q8CG46-2</id>
        <name>2</name>
        <sequence type="described" ref="VSP_022251 VSP_022252"/>
    </isoform>
</comment>
<comment type="tissue specificity">
    <text evidence="6">Expressed in testis but not ovary.</text>
</comment>
<comment type="developmental stage">
    <text evidence="6">Expressed in ovary and testis at 15.5 dpc.</text>
</comment>
<comment type="domain">
    <text evidence="1">The flexible hinge domain, which separates the large intramolecular coiled coil regions, allows the heterotypic interaction with the corresponding domain of SMC6, forming a V-shaped heterodimer.</text>
</comment>
<comment type="PTM">
    <text evidence="1">Sumoylated.</text>
</comment>
<comment type="PTM">
    <text evidence="1">Ubiquitinated.</text>
</comment>
<comment type="similarity">
    <text evidence="8">Belongs to the SMC family. SMC5 subfamily.</text>
</comment>
<comment type="sequence caution" evidence="8">
    <conflict type="erroneous initiation">
        <sequence resource="EMBL-CDS" id="AAH07174"/>
    </conflict>
</comment>
<protein>
    <recommendedName>
        <fullName>Structural maintenance of chromosomes protein 5</fullName>
        <shortName>SMC protein 5</shortName>
        <shortName>SMC-5</shortName>
        <shortName>mSMC5</shortName>
    </recommendedName>
    <alternativeName>
        <fullName>Protein expressed in male leptotene and zygotene spermatocytes 453</fullName>
        <shortName>MLZ-453</shortName>
    </alternativeName>
</protein>
<sequence>MATPSGKAAPPNPQVSKRSLPRDASSEVPSKRKNSNPLPTLPRPSGTFVEGSIVRIAMENFLTYDICEVSPGPHLNMIIGANGTGKSSIVCAICLGLAGKPAFMGRADKVGFFVKRGCSKGLVEIELFRTSGNLIITREIDVIKNQSFWFINKKPVTQKIVEEQVAALNIQVGNLCQFLPQDKVGEFAKLSKIELLEATEKSVGPPEMHRYHCELKNFREKEKQLETSCKEKTEYLEKMVQRNERYKQDVERFYERKRHLDLIEMLEAKRPWVEYENVRQEYEGVKLIRDRVKEEVRKLKEGQIPMTRRIEEIDRQRHTLEVRIKEKSTDIKEASQKCKQRQDLIERKDRQIKELQQALTVKQNEELDRQKRISNTRKMIEDLQSELKTAENCENLQPQIDTVTNDLRRVQEEKALCEGEIIDKQREKEMLEKQRRSVSDHITRFDNLMNQKEDKLRQRYRDTYDAVLWLRNNRDRFKQRVCEPIMLTINMKDNKNAKYVENHISSNDLRAFVFESQEDMEIFLREVRDNKKLRVNAVIAPKISYADKAPSRSLNDLKQYGFFSYLRELFDAPDPVMSYLCCQYHIHEVPVGTERTRERIERVIQETRLKQIYTAEEKYVLKTSVYSNKVISSNTSLKVAQFLTVTVDLEQRRHLEEQLKEMNRQLEAVDSGLAALRDTNRHLELKDNELRLKKKELLERKTRKRQLEQKISSKLASIRLMEQDTCNLEEEERKASTKIKEINVQKAKLVTELTGLVKICTSFQIQKVDLILQNTTVISEKNKLEADYMASSSQLRVTEQQFIELDDNRQRLLQKCKELMKKARQVCNLSADQAVPQEFQTQVPTIPNGHSSSPPMAFQDLPNTLDEIDALLTEERSRASCFTGLNPSVVEEYSKREVEIQQLTEELQGKKVELDEYRENISQVKERWLNPLKELVEKINEKFSNFFSSMQCAGEVDLHTENEEDYDKYGIRIRVKFRSSTQLHELTPHHQSGGERSVSTMLYLMALQELNRCPFRVVDEINQGMDPINERRVFEMVVNTACKENTSQYFFITPKLLQNLPYSEKMTVLFVYNGPHMLEPNRWNLKAFQRRRRRITFTQPQ</sequence>
<gene>
    <name type="primary">Smc5</name>
    <name type="synonym">Kiaa0594</name>
    <name type="synonym">Smc5l1</name>
</gene>